<feature type="chain" id="PRO_0000167391" description="UPF0102 protein VV0603">
    <location>
        <begin position="1"/>
        <end position="122"/>
    </location>
</feature>
<reference key="1">
    <citation type="journal article" date="2003" name="Genome Res.">
        <title>Comparative genome analysis of Vibrio vulnificus, a marine pathogen.</title>
        <authorList>
            <person name="Chen C.-Y."/>
            <person name="Wu K.-M."/>
            <person name="Chang Y.-C."/>
            <person name="Chang C.-H."/>
            <person name="Tsai H.-C."/>
            <person name="Liao T.-L."/>
            <person name="Liu Y.-M."/>
            <person name="Chen H.-J."/>
            <person name="Shen A.B.-T."/>
            <person name="Li J.-C."/>
            <person name="Su T.-L."/>
            <person name="Shao C.-P."/>
            <person name="Lee C.-T."/>
            <person name="Hor L.-I."/>
            <person name="Tsai S.-F."/>
        </authorList>
    </citation>
    <scope>NUCLEOTIDE SEQUENCE [LARGE SCALE GENOMIC DNA]</scope>
    <source>
        <strain>YJ016</strain>
    </source>
</reference>
<comment type="similarity">
    <text evidence="1">Belongs to the UPF0102 family.</text>
</comment>
<dbReference type="EMBL" id="BA000037">
    <property type="protein sequence ID" value="BAC93367.1"/>
    <property type="molecule type" value="Genomic_DNA"/>
</dbReference>
<dbReference type="RefSeq" id="WP_011078675.1">
    <property type="nucleotide sequence ID" value="NC_005139.1"/>
</dbReference>
<dbReference type="SMR" id="Q7MNW2"/>
<dbReference type="STRING" id="672.VV93_v1c05450"/>
<dbReference type="KEGG" id="vvy:VV0603"/>
<dbReference type="PATRIC" id="fig|196600.6.peg.622"/>
<dbReference type="eggNOG" id="COG0792">
    <property type="taxonomic scope" value="Bacteria"/>
</dbReference>
<dbReference type="HOGENOM" id="CLU_115353_1_1_6"/>
<dbReference type="Proteomes" id="UP000002675">
    <property type="component" value="Chromosome I"/>
</dbReference>
<dbReference type="GO" id="GO:0003676">
    <property type="term" value="F:nucleic acid binding"/>
    <property type="evidence" value="ECO:0007669"/>
    <property type="project" value="InterPro"/>
</dbReference>
<dbReference type="CDD" id="cd20736">
    <property type="entry name" value="PoNe_Nuclease"/>
    <property type="match status" value="1"/>
</dbReference>
<dbReference type="Gene3D" id="3.40.1350.10">
    <property type="match status" value="1"/>
</dbReference>
<dbReference type="HAMAP" id="MF_00048">
    <property type="entry name" value="UPF0102"/>
    <property type="match status" value="1"/>
</dbReference>
<dbReference type="InterPro" id="IPR011335">
    <property type="entry name" value="Restrct_endonuc-II-like"/>
</dbReference>
<dbReference type="InterPro" id="IPR011856">
    <property type="entry name" value="tRNA_endonuc-like_dom_sf"/>
</dbReference>
<dbReference type="InterPro" id="IPR003509">
    <property type="entry name" value="UPF0102_YraN-like"/>
</dbReference>
<dbReference type="NCBIfam" id="NF009150">
    <property type="entry name" value="PRK12497.1-3"/>
    <property type="match status" value="1"/>
</dbReference>
<dbReference type="NCBIfam" id="TIGR00252">
    <property type="entry name" value="YraN family protein"/>
    <property type="match status" value="1"/>
</dbReference>
<dbReference type="PANTHER" id="PTHR34039">
    <property type="entry name" value="UPF0102 PROTEIN YRAN"/>
    <property type="match status" value="1"/>
</dbReference>
<dbReference type="PANTHER" id="PTHR34039:SF1">
    <property type="entry name" value="UPF0102 PROTEIN YRAN"/>
    <property type="match status" value="1"/>
</dbReference>
<dbReference type="Pfam" id="PF02021">
    <property type="entry name" value="UPF0102"/>
    <property type="match status" value="1"/>
</dbReference>
<dbReference type="SUPFAM" id="SSF52980">
    <property type="entry name" value="Restriction endonuclease-like"/>
    <property type="match status" value="1"/>
</dbReference>
<organism>
    <name type="scientific">Vibrio vulnificus (strain YJ016)</name>
    <dbReference type="NCBI Taxonomy" id="196600"/>
    <lineage>
        <taxon>Bacteria</taxon>
        <taxon>Pseudomonadati</taxon>
        <taxon>Pseudomonadota</taxon>
        <taxon>Gammaproteobacteria</taxon>
        <taxon>Vibrionales</taxon>
        <taxon>Vibrionaceae</taxon>
        <taxon>Vibrio</taxon>
    </lineage>
</organism>
<accession>Q7MNW2</accession>
<proteinExistence type="inferred from homology"/>
<sequence length="122" mass="13849">MGLFSRRAIGNQYESLAKEYLQRQGLRFIEANFTTKVGEIDLIFKEAQTIVFVEVKYRKNSCYGDAAEMVNPAKANKLIKTAYLWLNKHGYNACNTAMRFDVVAIHSNGHDINWIANAITQG</sequence>
<evidence type="ECO:0000255" key="1">
    <source>
        <dbReference type="HAMAP-Rule" id="MF_00048"/>
    </source>
</evidence>
<protein>
    <recommendedName>
        <fullName evidence="1">UPF0102 protein VV0603</fullName>
    </recommendedName>
</protein>
<name>Y603_VIBVY</name>
<gene>
    <name type="ordered locus">VV0603</name>
</gene>